<comment type="function">
    <text>Prevents the establishment of cellular antiviral state by blocking the interferon-alpha/beta (IFN-alpha/beta) and IFN-gamma signaling pathways. Blocks the IFN-induced nuclear accumulation of host phosphorylated STAT1, by interacting with the STAT1-binding region of host importin alpha-1/KPNA1 protein, thereby inhibiting the latter. Without the activity of this protein, activated STAT1 would not enter the nucleus and be unable to activate IFN-induced genes. Plays a role in assembly of viral nucleocapsid and virion budding. May act as a minor matrix protein that plays a role in assembly of viral nucleocapsid and virion budding.</text>
</comment>
<comment type="subunit">
    <text evidence="2 3">Interacts with host importins KPNA1, KPNA5 and KPNA6 (PubMed:27974555). Interacts with host STAT1 (PubMed:22383882).</text>
</comment>
<comment type="subcellular location">
    <subcellularLocation>
        <location evidence="1">Virion membrane</location>
        <topology evidence="1">Peripheral membrane protein</topology>
    </subcellularLocation>
    <subcellularLocation>
        <location evidence="1">Host cell membrane</location>
        <topology evidence="1">Peripheral membrane protein</topology>
        <orientation evidence="1">Cytoplasmic side</orientation>
    </subcellularLocation>
    <subcellularLocation>
        <location evidence="1">Host endomembrane system</location>
        <topology evidence="1">Peripheral membrane protein</topology>
    </subcellularLocation>
    <text evidence="1">In virion, localizes on the intravirional side of the membrane. In the host cell, it is found associated with virus-induced membrane proliferation foci and to the plasma membrane where budding takes place (By similarity).</text>
</comment>
<comment type="similarity">
    <text evidence="5">Belongs to the filoviridae membrane-associated protein VP24 family.</text>
</comment>
<dbReference type="EMBL" id="AY729654">
    <property type="protein sequence ID" value="AAU43889.1"/>
    <property type="molecule type" value="Genomic_RNA"/>
</dbReference>
<dbReference type="RefSeq" id="YP_138526.1">
    <property type="nucleotide sequence ID" value="NC_006432.1"/>
</dbReference>
<dbReference type="PDB" id="3VNE">
    <property type="method" value="X-ray"/>
    <property type="resolution" value="2.00 A"/>
    <property type="chains" value="A=9-232"/>
</dbReference>
<dbReference type="PDB" id="3VNF">
    <property type="method" value="X-ray"/>
    <property type="resolution" value="2.10 A"/>
    <property type="chains" value="A=13-228"/>
</dbReference>
<dbReference type="PDBsum" id="3VNE"/>
<dbReference type="PDBsum" id="3VNF"/>
<dbReference type="SMR" id="Q5XX02"/>
<dbReference type="DNASU" id="3160772"/>
<dbReference type="GeneID" id="3160772"/>
<dbReference type="KEGG" id="vg:3160772"/>
<dbReference type="EvolutionaryTrace" id="Q5XX02"/>
<dbReference type="Proteomes" id="UP000000277">
    <property type="component" value="Segment"/>
</dbReference>
<dbReference type="GO" id="GO:0033645">
    <property type="term" value="C:host cell endomembrane system"/>
    <property type="evidence" value="ECO:0007669"/>
    <property type="project" value="UniProtKB-SubCell"/>
</dbReference>
<dbReference type="GO" id="GO:0020002">
    <property type="term" value="C:host cell plasma membrane"/>
    <property type="evidence" value="ECO:0007669"/>
    <property type="project" value="UniProtKB-SubCell"/>
</dbReference>
<dbReference type="GO" id="GO:0016020">
    <property type="term" value="C:membrane"/>
    <property type="evidence" value="ECO:0007669"/>
    <property type="project" value="UniProtKB-KW"/>
</dbReference>
<dbReference type="GO" id="GO:0055036">
    <property type="term" value="C:virion membrane"/>
    <property type="evidence" value="ECO:0007669"/>
    <property type="project" value="UniProtKB-SubCell"/>
</dbReference>
<dbReference type="GO" id="GO:0005198">
    <property type="term" value="F:structural molecule activity"/>
    <property type="evidence" value="ECO:0007669"/>
    <property type="project" value="InterPro"/>
</dbReference>
<dbReference type="GO" id="GO:0052170">
    <property type="term" value="P:symbiont-mediated suppression of host innate immune response"/>
    <property type="evidence" value="ECO:0007669"/>
    <property type="project" value="UniProtKB-KW"/>
</dbReference>
<dbReference type="GO" id="GO:0016032">
    <property type="term" value="P:viral process"/>
    <property type="evidence" value="ECO:0007669"/>
    <property type="project" value="InterPro"/>
</dbReference>
<dbReference type="InterPro" id="IPR009433">
    <property type="entry name" value="Filo_VP24"/>
</dbReference>
<dbReference type="Pfam" id="PF06389">
    <property type="entry name" value="Filo_VP24"/>
    <property type="match status" value="1"/>
</dbReference>
<dbReference type="PIRSF" id="PIRSF011355">
    <property type="entry name" value="VP24"/>
    <property type="match status" value="1"/>
</dbReference>
<evidence type="ECO:0000250" key="1"/>
<evidence type="ECO:0000269" key="2">
    <source>
    </source>
</evidence>
<evidence type="ECO:0000269" key="3">
    <source>
    </source>
</evidence>
<evidence type="ECO:0000303" key="4">
    <source>
    </source>
</evidence>
<evidence type="ECO:0000305" key="5"/>
<evidence type="ECO:0007744" key="6">
    <source>
        <dbReference type="PDB" id="3VNE"/>
    </source>
</evidence>
<evidence type="ECO:0007744" key="7">
    <source>
        <dbReference type="PDB" id="3VNF"/>
    </source>
</evidence>
<evidence type="ECO:0007829" key="8">
    <source>
        <dbReference type="PDB" id="3VNE"/>
    </source>
</evidence>
<evidence type="ECO:0007829" key="9">
    <source>
        <dbReference type="PDB" id="3VNF"/>
    </source>
</evidence>
<organism>
    <name type="scientific">Sudan ebolavirus (strain Human/Uganda/Gulu/2000)</name>
    <name type="common">SEBOV</name>
    <name type="synonym">Sudan Ebola virus</name>
    <dbReference type="NCBI Taxonomy" id="386033"/>
    <lineage>
        <taxon>Viruses</taxon>
        <taxon>Riboviria</taxon>
        <taxon>Orthornavirae</taxon>
        <taxon>Negarnaviricota</taxon>
        <taxon>Haploviricotina</taxon>
        <taxon>Monjiviricetes</taxon>
        <taxon>Mononegavirales</taxon>
        <taxon>Filoviridae</taxon>
        <taxon>Orthoebolavirus</taxon>
        <taxon>Orthoebolavirus sudanense</taxon>
        <taxon>Sudan ebolavirus</taxon>
    </lineage>
</organism>
<protein>
    <recommendedName>
        <fullName>Membrane-associated protein VP24</fullName>
    </recommendedName>
    <alternativeName>
        <fullName evidence="4">Reston VP24</fullName>
        <shortName evidence="4">rVP24</shortName>
    </alternativeName>
</protein>
<gene>
    <name type="primary">VP24</name>
</gene>
<name>VP24_EBOSU</name>
<feature type="chain" id="PRO_0000245069" description="Membrane-associated protein VP24">
    <location>
        <begin position="1"/>
        <end position="251"/>
    </location>
</feature>
<feature type="helix" evidence="8">
    <location>
        <begin position="16"/>
        <end position="27"/>
    </location>
</feature>
<feature type="strand" evidence="8">
    <location>
        <begin position="30"/>
        <end position="33"/>
    </location>
</feature>
<feature type="strand" evidence="8">
    <location>
        <begin position="35"/>
        <end position="42"/>
    </location>
</feature>
<feature type="strand" evidence="8">
    <location>
        <begin position="45"/>
        <end position="50"/>
    </location>
</feature>
<feature type="helix" evidence="8">
    <location>
        <begin position="54"/>
        <end position="61"/>
    </location>
</feature>
<feature type="helix" evidence="8">
    <location>
        <begin position="67"/>
        <end position="69"/>
    </location>
</feature>
<feature type="helix" evidence="8">
    <location>
        <begin position="70"/>
        <end position="75"/>
    </location>
</feature>
<feature type="helix" evidence="8">
    <location>
        <begin position="77"/>
        <end position="80"/>
    </location>
</feature>
<feature type="strand" evidence="8">
    <location>
        <begin position="85"/>
        <end position="87"/>
    </location>
</feature>
<feature type="helix" evidence="8">
    <location>
        <begin position="90"/>
        <end position="103"/>
    </location>
</feature>
<feature type="helix" evidence="8">
    <location>
        <begin position="115"/>
        <end position="128"/>
    </location>
</feature>
<feature type="helix" evidence="8">
    <location>
        <begin position="139"/>
        <end position="144"/>
    </location>
</feature>
<feature type="helix" evidence="8">
    <location>
        <begin position="147"/>
        <end position="165"/>
    </location>
</feature>
<feature type="strand" evidence="9">
    <location>
        <begin position="172"/>
        <end position="174"/>
    </location>
</feature>
<feature type="strand" evidence="8">
    <location>
        <begin position="178"/>
        <end position="182"/>
    </location>
</feature>
<feature type="strand" evidence="8">
    <location>
        <begin position="187"/>
        <end position="192"/>
    </location>
</feature>
<feature type="strand" evidence="8">
    <location>
        <begin position="194"/>
        <end position="202"/>
    </location>
</feature>
<feature type="helix" evidence="8">
    <location>
        <begin position="207"/>
        <end position="209"/>
    </location>
</feature>
<feature type="strand" evidence="8">
    <location>
        <begin position="211"/>
        <end position="213"/>
    </location>
</feature>
<feature type="strand" evidence="8">
    <location>
        <begin position="217"/>
        <end position="223"/>
    </location>
</feature>
<feature type="turn" evidence="8">
    <location>
        <begin position="224"/>
        <end position="227"/>
    </location>
</feature>
<feature type="helix" evidence="8">
    <location>
        <begin position="228"/>
        <end position="230"/>
    </location>
</feature>
<keyword id="KW-0002">3D-structure</keyword>
<keyword id="KW-1032">Host cell membrane</keyword>
<keyword id="KW-1043">Host membrane</keyword>
<keyword id="KW-0945">Host-virus interaction</keyword>
<keyword id="KW-1090">Inhibition of host innate immune response by virus</keyword>
<keyword id="KW-0922">Interferon antiviral system evasion</keyword>
<keyword id="KW-0472">Membrane</keyword>
<keyword id="KW-0899">Viral immunoevasion</keyword>
<keyword id="KW-0946">Virion</keyword>
<sequence>MAKATGRYNLVTPKRELEQGVVFSDLCNFLVTPTVQGWKVYWAGLEFDVNQKGITLLNRLKVNDFAPAWAMTRNLFPHLFKNQQSEVQTPIWALRVILAAGILDQLMDHSLIEPLSGALNLIADWLLTTSTNHFNMRTQRVKDQLSMRMLSLIRSNIINFINKLETLHVVNYKGLLSSVEIGTPSYAIIITRTNMGYLVEVQEPDKSAMDIRHPGPVKFSLLHESTLKPVATPKPSSITSLIMEFNSSLAI</sequence>
<proteinExistence type="evidence at protein level"/>
<reference key="1">
    <citation type="journal article" date="2005" name="Virus Res.">
        <title>Complete genome sequence of an Ebola virus (Sudan species) responsible for a 2000 outbreak of human disease in Uganda.</title>
        <authorList>
            <person name="Sanchez A."/>
            <person name="Rollin P.E."/>
        </authorList>
    </citation>
    <scope>NUCLEOTIDE SEQUENCE [GENOMIC RNA]</scope>
</reference>
<reference key="2">
    <citation type="journal article" date="2017" name="J. Virol.">
        <title>VP24-Karyopherin Alpha Binding Affinities Differ between Ebolavirus Species, Influencing Interferon Inhibition and VP24 Stability.</title>
        <authorList>
            <person name="Schwarz T.M."/>
            <person name="Edwards M.R."/>
            <person name="Diederichs A."/>
            <person name="Alinger J.B."/>
            <person name="Leung D.W."/>
            <person name="Amarasinghe G.K."/>
            <person name="Basler C.F."/>
        </authorList>
    </citation>
    <scope>INTERACTION WITH HOST KPNA1; KPNA5 AND KPNA6</scope>
    <scope>NOMENCLATURE</scope>
</reference>
<reference evidence="6 7" key="3">
    <citation type="journal article" date="2012" name="PLoS Pathog.">
        <title>The ebola virus interferon antagonist VP24 directly binds STAT1 and has a novel, pyramidal fold.</title>
        <authorList>
            <person name="Zhang A.P."/>
            <person name="Bornholdt Z.A."/>
            <person name="Liu T."/>
            <person name="Abelson D.M."/>
            <person name="Lee D.E."/>
            <person name="Li S."/>
            <person name="Woods V.L. Jr."/>
            <person name="Saphire E.O."/>
        </authorList>
    </citation>
    <scope>X-RAY CRYSTALLOGRAPHY (2.00 ANGSTROMS) OF 9-232</scope>
    <scope>INTERACTION WITH HOST STAT1</scope>
</reference>
<organismHost>
    <name type="scientific">Epomops franqueti</name>
    <name type="common">Franquet's epauletted fruit bat</name>
    <name type="synonym">Epomophorus franqueti</name>
    <dbReference type="NCBI Taxonomy" id="77231"/>
</organismHost>
<organismHost>
    <name type="scientific">Homo sapiens</name>
    <name type="common">Human</name>
    <dbReference type="NCBI Taxonomy" id="9606"/>
</organismHost>
<organismHost>
    <name type="scientific">Myonycteris torquata</name>
    <name type="common">Little collared fruit bat</name>
    <dbReference type="NCBI Taxonomy" id="77243"/>
</organismHost>
<accession>Q5XX02</accession>